<reference key="1">
    <citation type="journal article" date="2005" name="Science">
        <title>The transcriptional landscape of the mammalian genome.</title>
        <authorList>
            <person name="Carninci P."/>
            <person name="Kasukawa T."/>
            <person name="Katayama S."/>
            <person name="Gough J."/>
            <person name="Frith M.C."/>
            <person name="Maeda N."/>
            <person name="Oyama R."/>
            <person name="Ravasi T."/>
            <person name="Lenhard B."/>
            <person name="Wells C."/>
            <person name="Kodzius R."/>
            <person name="Shimokawa K."/>
            <person name="Bajic V.B."/>
            <person name="Brenner S.E."/>
            <person name="Batalov S."/>
            <person name="Forrest A.R."/>
            <person name="Zavolan M."/>
            <person name="Davis M.J."/>
            <person name="Wilming L.G."/>
            <person name="Aidinis V."/>
            <person name="Allen J.E."/>
            <person name="Ambesi-Impiombato A."/>
            <person name="Apweiler R."/>
            <person name="Aturaliya R.N."/>
            <person name="Bailey T.L."/>
            <person name="Bansal M."/>
            <person name="Baxter L."/>
            <person name="Beisel K.W."/>
            <person name="Bersano T."/>
            <person name="Bono H."/>
            <person name="Chalk A.M."/>
            <person name="Chiu K.P."/>
            <person name="Choudhary V."/>
            <person name="Christoffels A."/>
            <person name="Clutterbuck D.R."/>
            <person name="Crowe M.L."/>
            <person name="Dalla E."/>
            <person name="Dalrymple B.P."/>
            <person name="de Bono B."/>
            <person name="Della Gatta G."/>
            <person name="di Bernardo D."/>
            <person name="Down T."/>
            <person name="Engstrom P."/>
            <person name="Fagiolini M."/>
            <person name="Faulkner G."/>
            <person name="Fletcher C.F."/>
            <person name="Fukushima T."/>
            <person name="Furuno M."/>
            <person name="Futaki S."/>
            <person name="Gariboldi M."/>
            <person name="Georgii-Hemming P."/>
            <person name="Gingeras T.R."/>
            <person name="Gojobori T."/>
            <person name="Green R.E."/>
            <person name="Gustincich S."/>
            <person name="Harbers M."/>
            <person name="Hayashi Y."/>
            <person name="Hensch T.K."/>
            <person name="Hirokawa N."/>
            <person name="Hill D."/>
            <person name="Huminiecki L."/>
            <person name="Iacono M."/>
            <person name="Ikeo K."/>
            <person name="Iwama A."/>
            <person name="Ishikawa T."/>
            <person name="Jakt M."/>
            <person name="Kanapin A."/>
            <person name="Katoh M."/>
            <person name="Kawasawa Y."/>
            <person name="Kelso J."/>
            <person name="Kitamura H."/>
            <person name="Kitano H."/>
            <person name="Kollias G."/>
            <person name="Krishnan S.P."/>
            <person name="Kruger A."/>
            <person name="Kummerfeld S.K."/>
            <person name="Kurochkin I.V."/>
            <person name="Lareau L.F."/>
            <person name="Lazarevic D."/>
            <person name="Lipovich L."/>
            <person name="Liu J."/>
            <person name="Liuni S."/>
            <person name="McWilliam S."/>
            <person name="Madan Babu M."/>
            <person name="Madera M."/>
            <person name="Marchionni L."/>
            <person name="Matsuda H."/>
            <person name="Matsuzawa S."/>
            <person name="Miki H."/>
            <person name="Mignone F."/>
            <person name="Miyake S."/>
            <person name="Morris K."/>
            <person name="Mottagui-Tabar S."/>
            <person name="Mulder N."/>
            <person name="Nakano N."/>
            <person name="Nakauchi H."/>
            <person name="Ng P."/>
            <person name="Nilsson R."/>
            <person name="Nishiguchi S."/>
            <person name="Nishikawa S."/>
            <person name="Nori F."/>
            <person name="Ohara O."/>
            <person name="Okazaki Y."/>
            <person name="Orlando V."/>
            <person name="Pang K.C."/>
            <person name="Pavan W.J."/>
            <person name="Pavesi G."/>
            <person name="Pesole G."/>
            <person name="Petrovsky N."/>
            <person name="Piazza S."/>
            <person name="Reed J."/>
            <person name="Reid J.F."/>
            <person name="Ring B.Z."/>
            <person name="Ringwald M."/>
            <person name="Rost B."/>
            <person name="Ruan Y."/>
            <person name="Salzberg S.L."/>
            <person name="Sandelin A."/>
            <person name="Schneider C."/>
            <person name="Schoenbach C."/>
            <person name="Sekiguchi K."/>
            <person name="Semple C.A."/>
            <person name="Seno S."/>
            <person name="Sessa L."/>
            <person name="Sheng Y."/>
            <person name="Shibata Y."/>
            <person name="Shimada H."/>
            <person name="Shimada K."/>
            <person name="Silva D."/>
            <person name="Sinclair B."/>
            <person name="Sperling S."/>
            <person name="Stupka E."/>
            <person name="Sugiura K."/>
            <person name="Sultana R."/>
            <person name="Takenaka Y."/>
            <person name="Taki K."/>
            <person name="Tammoja K."/>
            <person name="Tan S.L."/>
            <person name="Tang S."/>
            <person name="Taylor M.S."/>
            <person name="Tegner J."/>
            <person name="Teichmann S.A."/>
            <person name="Ueda H.R."/>
            <person name="van Nimwegen E."/>
            <person name="Verardo R."/>
            <person name="Wei C.L."/>
            <person name="Yagi K."/>
            <person name="Yamanishi H."/>
            <person name="Zabarovsky E."/>
            <person name="Zhu S."/>
            <person name="Zimmer A."/>
            <person name="Hide W."/>
            <person name="Bult C."/>
            <person name="Grimmond S.M."/>
            <person name="Teasdale R.D."/>
            <person name="Liu E.T."/>
            <person name="Brusic V."/>
            <person name="Quackenbush J."/>
            <person name="Wahlestedt C."/>
            <person name="Mattick J.S."/>
            <person name="Hume D.A."/>
            <person name="Kai C."/>
            <person name="Sasaki D."/>
            <person name="Tomaru Y."/>
            <person name="Fukuda S."/>
            <person name="Kanamori-Katayama M."/>
            <person name="Suzuki M."/>
            <person name="Aoki J."/>
            <person name="Arakawa T."/>
            <person name="Iida J."/>
            <person name="Imamura K."/>
            <person name="Itoh M."/>
            <person name="Kato T."/>
            <person name="Kawaji H."/>
            <person name="Kawagashira N."/>
            <person name="Kawashima T."/>
            <person name="Kojima M."/>
            <person name="Kondo S."/>
            <person name="Konno H."/>
            <person name="Nakano K."/>
            <person name="Ninomiya N."/>
            <person name="Nishio T."/>
            <person name="Okada M."/>
            <person name="Plessy C."/>
            <person name="Shibata K."/>
            <person name="Shiraki T."/>
            <person name="Suzuki S."/>
            <person name="Tagami M."/>
            <person name="Waki K."/>
            <person name="Watahiki A."/>
            <person name="Okamura-Oho Y."/>
            <person name="Suzuki H."/>
            <person name="Kawai J."/>
            <person name="Hayashizaki Y."/>
        </authorList>
    </citation>
    <scope>NUCLEOTIDE SEQUENCE [LARGE SCALE MRNA] (ISOFORMS 1 AND 2)</scope>
    <source>
        <strain>C57BL/6J</strain>
        <tissue>Liver</tissue>
    </source>
</reference>
<reference key="2">
    <citation type="journal article" date="2004" name="Genome Res.">
        <title>The status, quality, and expansion of the NIH full-length cDNA project: the Mammalian Gene Collection (MGC).</title>
        <authorList>
            <consortium name="The MGC Project Team"/>
        </authorList>
    </citation>
    <scope>NUCLEOTIDE SEQUENCE [LARGE SCALE MRNA] (ISOFORM 1)</scope>
    <source>
        <tissue>Salivary gland</tissue>
    </source>
</reference>
<reference key="3">
    <citation type="journal article" date="2010" name="Cell">
        <title>A tissue-specific atlas of mouse protein phosphorylation and expression.</title>
        <authorList>
            <person name="Huttlin E.L."/>
            <person name="Jedrychowski M.P."/>
            <person name="Elias J.E."/>
            <person name="Goswami T."/>
            <person name="Rad R."/>
            <person name="Beausoleil S.A."/>
            <person name="Villen J."/>
            <person name="Haas W."/>
            <person name="Sowa M.E."/>
            <person name="Gygi S.P."/>
        </authorList>
    </citation>
    <scope>IDENTIFICATION BY MASS SPECTROMETRY [LARGE SCALE ANALYSIS]</scope>
    <source>
        <tissue>Brain</tissue>
        <tissue>Brown adipose tissue</tissue>
        <tissue>Heart</tissue>
        <tissue>Kidney</tissue>
        <tissue>Liver</tissue>
        <tissue>Lung</tissue>
        <tissue>Pancreas</tissue>
        <tissue>Spleen</tissue>
        <tissue>Testis</tissue>
    </source>
</reference>
<reference key="4">
    <citation type="journal article" date="2010" name="J. Biol. Chem.">
        <title>Aldehyde dehydrogenase 7A1 (ALDH7A1) is a novel enzyme involved in cellular defense against hyperosmotic stress.</title>
        <authorList>
            <person name="Brocker C."/>
            <person name="Lassen N."/>
            <person name="Estey T."/>
            <person name="Pappa A."/>
            <person name="Cantore M."/>
            <person name="Orlova V.V."/>
            <person name="Chavakis T."/>
            <person name="Kavanagh K.L."/>
            <person name="Oppermann U."/>
            <person name="Vasiliou V."/>
        </authorList>
    </citation>
    <scope>TISSUE SPECIFICITY</scope>
    <scope>ALTERNATIVE SPLICING</scope>
</reference>
<reference key="5">
    <citation type="journal article" date="2013" name="Mol. Cell">
        <title>SIRT5-mediated lysine desuccinylation impacts diverse metabolic pathways.</title>
        <authorList>
            <person name="Park J."/>
            <person name="Chen Y."/>
            <person name="Tishkoff D.X."/>
            <person name="Peng C."/>
            <person name="Tan M."/>
            <person name="Dai L."/>
            <person name="Xie Z."/>
            <person name="Zhang Y."/>
            <person name="Zwaans B.M."/>
            <person name="Skinner M.E."/>
            <person name="Lombard D.B."/>
            <person name="Zhao Y."/>
        </authorList>
    </citation>
    <scope>SUCCINYLATION [LARGE SCALE ANALYSIS] AT LYS-86; LYS-94; LYS-97 AND LYS-537</scope>
    <scope>IDENTIFICATION BY MASS SPECTROMETRY [LARGE SCALE ANALYSIS]</scope>
    <source>
        <tissue>Liver</tissue>
    </source>
</reference>
<reference key="6">
    <citation type="journal article" date="2013" name="Proc. Natl. Acad. Sci. U.S.A.">
        <title>Label-free quantitative proteomics of the lysine acetylome in mitochondria identifies substrates of SIRT3 in metabolic pathways.</title>
        <authorList>
            <person name="Rardin M.J."/>
            <person name="Newman J.C."/>
            <person name="Held J.M."/>
            <person name="Cusack M.P."/>
            <person name="Sorensen D.J."/>
            <person name="Li B."/>
            <person name="Schilling B."/>
            <person name="Mooney S.D."/>
            <person name="Kahn C.R."/>
            <person name="Verdin E."/>
            <person name="Gibson B.W."/>
        </authorList>
    </citation>
    <scope>ACETYLATION [LARGE SCALE ANALYSIS] AT LYS-86; LYS-94; LYS-97; LYS-462 AND LYS-500</scope>
    <scope>IDENTIFICATION BY MASS SPECTROMETRY [LARGE SCALE ANALYSIS]</scope>
    <source>
        <tissue>Liver</tissue>
    </source>
</reference>
<name>AL7A1_MOUSE</name>
<comment type="function">
    <text evidence="2">Multifunctional enzyme mediating important protective effects. Metabolizes betaine aldehyde to betaine, an important cellular osmolyte and methyl donor. Protects cells from oxidative stress by metabolizing a number of lipid peroxidation-derived aldehydes. Involved in lysine catabolism.</text>
</comment>
<comment type="catalytic activity">
    <reaction evidence="2">
        <text>nonanal + NAD(+) + H2O = nonanoate + NADH + 2 H(+)</text>
        <dbReference type="Rhea" id="RHEA:69759"/>
        <dbReference type="ChEBI" id="CHEBI:15377"/>
        <dbReference type="ChEBI" id="CHEBI:15378"/>
        <dbReference type="ChEBI" id="CHEBI:32361"/>
        <dbReference type="ChEBI" id="CHEBI:57540"/>
        <dbReference type="ChEBI" id="CHEBI:57945"/>
        <dbReference type="ChEBI" id="CHEBI:84268"/>
    </reaction>
    <physiologicalReaction direction="left-to-right" evidence="2">
        <dbReference type="Rhea" id="RHEA:69760"/>
    </physiologicalReaction>
</comment>
<comment type="catalytic activity">
    <reaction evidence="2">
        <text>(S)-2-amino-6-oxohexanoate + NAD(+) + H2O = L-2-aminoadipate + NADH + 2 H(+)</text>
        <dbReference type="Rhea" id="RHEA:12308"/>
        <dbReference type="ChEBI" id="CHEBI:15377"/>
        <dbReference type="ChEBI" id="CHEBI:15378"/>
        <dbReference type="ChEBI" id="CHEBI:57540"/>
        <dbReference type="ChEBI" id="CHEBI:57945"/>
        <dbReference type="ChEBI" id="CHEBI:58321"/>
        <dbReference type="ChEBI" id="CHEBI:58672"/>
        <dbReference type="EC" id="1.2.1.31"/>
    </reaction>
    <physiologicalReaction direction="left-to-right" evidence="2">
        <dbReference type="Rhea" id="RHEA:12309"/>
    </physiologicalReaction>
</comment>
<comment type="catalytic activity">
    <reaction evidence="2">
        <text>betaine aldehyde + NAD(+) + H2O = glycine betaine + NADH + 2 H(+)</text>
        <dbReference type="Rhea" id="RHEA:15305"/>
        <dbReference type="ChEBI" id="CHEBI:15377"/>
        <dbReference type="ChEBI" id="CHEBI:15378"/>
        <dbReference type="ChEBI" id="CHEBI:15710"/>
        <dbReference type="ChEBI" id="CHEBI:17750"/>
        <dbReference type="ChEBI" id="CHEBI:57540"/>
        <dbReference type="ChEBI" id="CHEBI:57945"/>
        <dbReference type="EC" id="1.2.1.8"/>
    </reaction>
    <physiologicalReaction direction="left-to-right" evidence="2">
        <dbReference type="Rhea" id="RHEA:15306"/>
    </physiologicalReaction>
</comment>
<comment type="catalytic activity">
    <reaction evidence="2">
        <text>an aldehyde + NAD(+) + H2O = a carboxylate + NADH + 2 H(+)</text>
        <dbReference type="Rhea" id="RHEA:16185"/>
        <dbReference type="ChEBI" id="CHEBI:15377"/>
        <dbReference type="ChEBI" id="CHEBI:15378"/>
        <dbReference type="ChEBI" id="CHEBI:17478"/>
        <dbReference type="ChEBI" id="CHEBI:29067"/>
        <dbReference type="ChEBI" id="CHEBI:57540"/>
        <dbReference type="ChEBI" id="CHEBI:57945"/>
        <dbReference type="EC" id="1.2.1.3"/>
    </reaction>
    <physiologicalReaction direction="left-to-right" evidence="2">
        <dbReference type="Rhea" id="RHEA:16186"/>
    </physiologicalReaction>
</comment>
<comment type="catalytic activity">
    <reaction evidence="2">
        <text>hexanal + NAD(+) + H2O = hexanoate + NADH + 2 H(+)</text>
        <dbReference type="Rhea" id="RHEA:67276"/>
        <dbReference type="ChEBI" id="CHEBI:15377"/>
        <dbReference type="ChEBI" id="CHEBI:15378"/>
        <dbReference type="ChEBI" id="CHEBI:17120"/>
        <dbReference type="ChEBI" id="CHEBI:57540"/>
        <dbReference type="ChEBI" id="CHEBI:57945"/>
        <dbReference type="ChEBI" id="CHEBI:88528"/>
    </reaction>
    <physiologicalReaction direction="left-to-right" evidence="2">
        <dbReference type="Rhea" id="RHEA:67277"/>
    </physiologicalReaction>
</comment>
<comment type="catalytic activity">
    <reaction evidence="2">
        <text>octanal + NAD(+) + H2O = octanoate + NADH + 2 H(+)</text>
        <dbReference type="Rhea" id="RHEA:44100"/>
        <dbReference type="ChEBI" id="CHEBI:15377"/>
        <dbReference type="ChEBI" id="CHEBI:15378"/>
        <dbReference type="ChEBI" id="CHEBI:17935"/>
        <dbReference type="ChEBI" id="CHEBI:25646"/>
        <dbReference type="ChEBI" id="CHEBI:57540"/>
        <dbReference type="ChEBI" id="CHEBI:57945"/>
    </reaction>
    <physiologicalReaction direction="left-to-right" evidence="2">
        <dbReference type="Rhea" id="RHEA:44101"/>
    </physiologicalReaction>
</comment>
<comment type="catalytic activity">
    <reaction evidence="2">
        <text>(E)-non-2-enal + NAD(+) + H2O = (E)-non-2-enoate + NADH + 2 H(+)</text>
        <dbReference type="Rhea" id="RHEA:69767"/>
        <dbReference type="ChEBI" id="CHEBI:15377"/>
        <dbReference type="ChEBI" id="CHEBI:15378"/>
        <dbReference type="ChEBI" id="CHEBI:57540"/>
        <dbReference type="ChEBI" id="CHEBI:57945"/>
        <dbReference type="ChEBI" id="CHEBI:142592"/>
        <dbReference type="ChEBI" id="CHEBI:143908"/>
    </reaction>
    <physiologicalReaction direction="left-to-right" evidence="2">
        <dbReference type="Rhea" id="RHEA:69768"/>
    </physiologicalReaction>
</comment>
<comment type="catalytic activity">
    <reaction evidence="2">
        <text>(E)-4-hydroxynon-2-enal + NAD(+) + H2O = (E)-4-hydroxynon-2-enoate + NADH + 2 H(+)</text>
        <dbReference type="Rhea" id="RHEA:67248"/>
        <dbReference type="ChEBI" id="CHEBI:15377"/>
        <dbReference type="ChEBI" id="CHEBI:15378"/>
        <dbReference type="ChEBI" id="CHEBI:57540"/>
        <dbReference type="ChEBI" id="CHEBI:57945"/>
        <dbReference type="ChEBI" id="CHEBI:58968"/>
        <dbReference type="ChEBI" id="CHEBI:142920"/>
    </reaction>
    <physiologicalReaction direction="left-to-right" evidence="2">
        <dbReference type="Rhea" id="RHEA:67249"/>
    </physiologicalReaction>
</comment>
<comment type="pathway">
    <text evidence="2">Amine and polyamine biosynthesis; betaine biosynthesis via choline pathway; betaine from betaine aldehyde: step 1/1.</text>
</comment>
<comment type="subunit">
    <text evidence="2">Homotetramer.</text>
</comment>
<comment type="subcellular location">
    <molecule>Isoform 1</molecule>
    <subcellularLocation>
        <location evidence="2">Cytoplasm</location>
        <location evidence="2">Cytosol</location>
    </subcellularLocation>
    <subcellularLocation>
        <location evidence="2">Nucleus</location>
    </subcellularLocation>
</comment>
<comment type="subcellular location">
    <molecule>Isoform 2</molecule>
    <subcellularLocation>
        <location evidence="2">Mitochondrion</location>
    </subcellularLocation>
</comment>
<comment type="alternative products">
    <event type="alternative splicing"/>
    <isoform>
        <id>Q9DBF1-1</id>
        <name>1</name>
        <name evidence="5">mALDH7A1_v2</name>
        <sequence type="displayed"/>
    </isoform>
    <isoform>
        <id>Q9DBF1-2</id>
        <name>2</name>
        <name evidence="5">mALDH7A1_v1</name>
        <sequence type="described" ref="VSP_038989"/>
    </isoform>
</comment>
<comment type="tissue specificity">
    <text evidence="5">Present in liver, kidney, brain and pancreas, and at lower levels in jejunum, duodenum, stomach and testes (at protein level).</text>
</comment>
<comment type="similarity">
    <text evidence="7">Belongs to the aldehyde dehydrogenase family.</text>
</comment>
<comment type="sequence caution" evidence="7">
    <conflict type="erroneous initiation">
        <sequence resource="EMBL-CDS" id="AAH12407"/>
    </conflict>
    <text>Truncated N-terminus.</text>
</comment>
<comment type="sequence caution" evidence="7">
    <conflict type="erroneous initiation">
        <sequence resource="EMBL-CDS" id="BAE26715"/>
    </conflict>
    <text>Truncated N-terminus.</text>
</comment>
<dbReference type="EC" id="1.2.1.31" evidence="2"/>
<dbReference type="EC" id="1.2.1.3" evidence="2"/>
<dbReference type="EC" id="1.2.1.8" evidence="2"/>
<dbReference type="EMBL" id="AK004991">
    <property type="protein sequence ID" value="BAB23726.1"/>
    <property type="molecule type" value="mRNA"/>
</dbReference>
<dbReference type="EMBL" id="AK145873">
    <property type="protein sequence ID" value="BAE26715.1"/>
    <property type="status" value="ALT_INIT"/>
    <property type="molecule type" value="mRNA"/>
</dbReference>
<dbReference type="EMBL" id="AK160117">
    <property type="protein sequence ID" value="BAE35641.1"/>
    <property type="molecule type" value="mRNA"/>
</dbReference>
<dbReference type="EMBL" id="AK169195">
    <property type="protein sequence ID" value="BAE40971.1"/>
    <property type="molecule type" value="mRNA"/>
</dbReference>
<dbReference type="EMBL" id="BC012407">
    <property type="protein sequence ID" value="AAH12407.1"/>
    <property type="status" value="ALT_INIT"/>
    <property type="molecule type" value="mRNA"/>
</dbReference>
<dbReference type="CCDS" id="CCDS29258.2">
    <molecule id="Q9DBF1-1"/>
</dbReference>
<dbReference type="CCDS" id="CCDS50291.1">
    <molecule id="Q9DBF1-2"/>
</dbReference>
<dbReference type="RefSeq" id="NP_001120810.1">
    <molecule id="Q9DBF1-2"/>
    <property type="nucleotide sequence ID" value="NM_001127338.1"/>
</dbReference>
<dbReference type="RefSeq" id="NP_613066.2">
    <molecule id="Q9DBF1-1"/>
    <property type="nucleotide sequence ID" value="NM_138600.4"/>
</dbReference>
<dbReference type="SMR" id="Q9DBF1"/>
<dbReference type="BioGRID" id="225826">
    <property type="interactions" value="17"/>
</dbReference>
<dbReference type="FunCoup" id="Q9DBF1">
    <property type="interactions" value="2661"/>
</dbReference>
<dbReference type="STRING" id="10090.ENSMUSP00000065089"/>
<dbReference type="GlyGen" id="Q9DBF1">
    <property type="glycosylation" value="4 sites, 2 N-linked glycans (2 sites), 1 O-linked glycan (2 sites)"/>
</dbReference>
<dbReference type="iPTMnet" id="Q9DBF1"/>
<dbReference type="PhosphoSitePlus" id="Q9DBF1"/>
<dbReference type="SwissPalm" id="Q9DBF1"/>
<dbReference type="REPRODUCTION-2DPAGE" id="Q9DBF1"/>
<dbReference type="jPOST" id="Q9DBF1"/>
<dbReference type="PaxDb" id="10090-ENSMUSP00000133372"/>
<dbReference type="PeptideAtlas" id="Q9DBF1"/>
<dbReference type="ProteomicsDB" id="296167">
    <molecule id="Q9DBF1-1"/>
</dbReference>
<dbReference type="ProteomicsDB" id="296168">
    <molecule id="Q9DBF1-2"/>
</dbReference>
<dbReference type="Pumba" id="Q9DBF1"/>
<dbReference type="Antibodypedia" id="13922">
    <property type="antibodies" value="272 antibodies from 28 providers"/>
</dbReference>
<dbReference type="DNASU" id="110695"/>
<dbReference type="Ensembl" id="ENSMUST00000066208.13">
    <molecule id="Q9DBF1-1"/>
    <property type="protein sequence ID" value="ENSMUSP00000065089.7"/>
    <property type="gene ID" value="ENSMUSG00000053644.14"/>
</dbReference>
<dbReference type="Ensembl" id="ENSMUST00000174518.8">
    <molecule id="Q9DBF1-2"/>
    <property type="protein sequence ID" value="ENSMUSP00000133372.2"/>
    <property type="gene ID" value="ENSMUSG00000053644.14"/>
</dbReference>
<dbReference type="GeneID" id="110695"/>
<dbReference type="KEGG" id="mmu:110695"/>
<dbReference type="UCSC" id="uc008eyn.2">
    <molecule id="Q9DBF1-1"/>
    <property type="organism name" value="mouse"/>
</dbReference>
<dbReference type="AGR" id="MGI:108186"/>
<dbReference type="CTD" id="501"/>
<dbReference type="MGI" id="MGI:108186">
    <property type="gene designation" value="Aldh7a1"/>
</dbReference>
<dbReference type="VEuPathDB" id="HostDB:ENSMUSG00000053644"/>
<dbReference type="eggNOG" id="KOG2453">
    <property type="taxonomic scope" value="Eukaryota"/>
</dbReference>
<dbReference type="GeneTree" id="ENSGT00940000154938"/>
<dbReference type="InParanoid" id="Q9DBF1"/>
<dbReference type="OMA" id="DAWKVYM"/>
<dbReference type="OrthoDB" id="310895at2759"/>
<dbReference type="PhylomeDB" id="Q9DBF1"/>
<dbReference type="TreeFam" id="TF300388"/>
<dbReference type="BRENDA" id="1.2.1.3">
    <property type="organism ID" value="3474"/>
</dbReference>
<dbReference type="BRENDA" id="1.2.1.31">
    <property type="organism ID" value="3474"/>
</dbReference>
<dbReference type="Reactome" id="R-MMU-6798163">
    <property type="pathway name" value="Choline catabolism"/>
</dbReference>
<dbReference type="Reactome" id="R-MMU-71064">
    <property type="pathway name" value="Lysine catabolism"/>
</dbReference>
<dbReference type="UniPathway" id="UPA00529">
    <property type="reaction ID" value="UER00386"/>
</dbReference>
<dbReference type="BioGRID-ORCS" id="110695">
    <property type="hits" value="2 hits in 81 CRISPR screens"/>
</dbReference>
<dbReference type="ChiTaRS" id="Aldh7a1">
    <property type="organism name" value="mouse"/>
</dbReference>
<dbReference type="PRO" id="PR:Q9DBF1"/>
<dbReference type="Proteomes" id="UP000000589">
    <property type="component" value="Chromosome 18"/>
</dbReference>
<dbReference type="RNAct" id="Q9DBF1">
    <property type="molecule type" value="protein"/>
</dbReference>
<dbReference type="Bgee" id="ENSMUSG00000053644">
    <property type="expression patterns" value="Expressed in left lobe of liver and 289 other cell types or tissues"/>
</dbReference>
<dbReference type="ExpressionAtlas" id="Q9DBF1">
    <property type="expression patterns" value="baseline and differential"/>
</dbReference>
<dbReference type="GO" id="GO:0005829">
    <property type="term" value="C:cytosol"/>
    <property type="evidence" value="ECO:0000250"/>
    <property type="project" value="UniProtKB"/>
</dbReference>
<dbReference type="GO" id="GO:0005739">
    <property type="term" value="C:mitochondrion"/>
    <property type="evidence" value="ECO:0007005"/>
    <property type="project" value="MGI"/>
</dbReference>
<dbReference type="GO" id="GO:0005634">
    <property type="term" value="C:nucleus"/>
    <property type="evidence" value="ECO:0007669"/>
    <property type="project" value="UniProtKB-SubCell"/>
</dbReference>
<dbReference type="GO" id="GO:0004029">
    <property type="term" value="F:aldehyde dehydrogenase (NAD+) activity"/>
    <property type="evidence" value="ECO:0000250"/>
    <property type="project" value="UniProtKB"/>
</dbReference>
<dbReference type="GO" id="GO:0008802">
    <property type="term" value="F:betaine-aldehyde dehydrogenase (NAD+) activity"/>
    <property type="evidence" value="ECO:0000250"/>
    <property type="project" value="UniProtKB"/>
</dbReference>
<dbReference type="GO" id="GO:0042802">
    <property type="term" value="F:identical protein binding"/>
    <property type="evidence" value="ECO:0000250"/>
    <property type="project" value="UniProtKB"/>
</dbReference>
<dbReference type="GO" id="GO:0004043">
    <property type="term" value="F:L-aminoadipate-semialdehyde dehydrogenase activity"/>
    <property type="evidence" value="ECO:0007669"/>
    <property type="project" value="UniProtKB-EC"/>
</dbReference>
<dbReference type="GO" id="GO:0019285">
    <property type="term" value="P:glycine betaine biosynthetic process from choline"/>
    <property type="evidence" value="ECO:0007669"/>
    <property type="project" value="UniProtKB-UniPathway"/>
</dbReference>
<dbReference type="CDD" id="cd07130">
    <property type="entry name" value="ALDH_F7_AASADH"/>
    <property type="match status" value="1"/>
</dbReference>
<dbReference type="FunFam" id="3.40.309.10:FF:000018">
    <property type="entry name" value="Alpha-aminoadipic semialdehyde dehydrogenase"/>
    <property type="match status" value="1"/>
</dbReference>
<dbReference type="FunFam" id="3.40.605.10:FF:000015">
    <property type="entry name" value="alpha-aminoadipic semialdehyde dehydrogenase"/>
    <property type="match status" value="1"/>
</dbReference>
<dbReference type="Gene3D" id="3.40.605.10">
    <property type="entry name" value="Aldehyde Dehydrogenase, Chain A, domain 1"/>
    <property type="match status" value="1"/>
</dbReference>
<dbReference type="Gene3D" id="3.40.309.10">
    <property type="entry name" value="Aldehyde Dehydrogenase, Chain A, domain 2"/>
    <property type="match status" value="1"/>
</dbReference>
<dbReference type="InterPro" id="IPR016161">
    <property type="entry name" value="Ald_DH/histidinol_DH"/>
</dbReference>
<dbReference type="InterPro" id="IPR016163">
    <property type="entry name" value="Ald_DH_C"/>
</dbReference>
<dbReference type="InterPro" id="IPR029510">
    <property type="entry name" value="Ald_DH_CS_GLU"/>
</dbReference>
<dbReference type="InterPro" id="IPR016162">
    <property type="entry name" value="Ald_DH_N"/>
</dbReference>
<dbReference type="InterPro" id="IPR015590">
    <property type="entry name" value="Aldehyde_DH_dom"/>
</dbReference>
<dbReference type="InterPro" id="IPR044638">
    <property type="entry name" value="ALDH7A1-like"/>
</dbReference>
<dbReference type="PANTHER" id="PTHR43521">
    <property type="entry name" value="ALPHA-AMINOADIPIC SEMIALDEHYDE DEHYDROGENASE"/>
    <property type="match status" value="1"/>
</dbReference>
<dbReference type="PANTHER" id="PTHR43521:SF1">
    <property type="entry name" value="ALPHA-AMINOADIPIC SEMIALDEHYDE DEHYDROGENASE"/>
    <property type="match status" value="1"/>
</dbReference>
<dbReference type="Pfam" id="PF00171">
    <property type="entry name" value="Aldedh"/>
    <property type="match status" value="1"/>
</dbReference>
<dbReference type="SUPFAM" id="SSF53720">
    <property type="entry name" value="ALDH-like"/>
    <property type="match status" value="1"/>
</dbReference>
<dbReference type="PROSITE" id="PS00687">
    <property type="entry name" value="ALDEHYDE_DEHYDR_GLU"/>
    <property type="match status" value="1"/>
</dbReference>
<sequence>MWRVPRRLCVQSVKTSKLSGPWSRPAAHMSTLLIHHPQYAWLQDLGLREDNEGVYNGSWGGRGEVITTYCPANNEPIARVRQASLKDYEETIGKAKKAWNIWADIPAPKRGEIVRKIGDAFREKIQLLGRLVSLEMGKILVEGIGEVQEYVDVCDYAAGLSRMIGGPTLPSERPGHALIEMWNPLGLVGIITAFNFPVAVFGWNNAIALITGNVCLWKGAPTTSLVSVAVTKIIAQVLEDNLLPGAICSLVCGGADIGTTMARDERVNLLSFTGSTQVGKEVALMVQERFGKSLLELGGNNAIIAFEDADLSLVVPSVLFAAVGTAGQRCTTVRRLFLHESIHNEVVDRLRSAYSQIRVGNPWDPNILYGPLHTKQAVSMFVRAVEEAKKQGGTVVYGGKVMDHPGNYVEPTIVTGLAHDAPIVHQETFAPILYVFKFQDEEEVFEWNNEVKQGLSSSIFTKDLGRIFRWLGPKGSDCGIVNVNIPTSGAEIGGAFGGEKHTGGGRESGSDAWKQYMRRSTCTINYSTSLPLAQGIKFQ</sequence>
<keyword id="KW-0007">Acetylation</keyword>
<keyword id="KW-0025">Alternative splicing</keyword>
<keyword id="KW-0963">Cytoplasm</keyword>
<keyword id="KW-0496">Mitochondrion</keyword>
<keyword id="KW-0520">NAD</keyword>
<keyword id="KW-0539">Nucleus</keyword>
<keyword id="KW-0560">Oxidoreductase</keyword>
<keyword id="KW-1185">Reference proteome</keyword>
<keyword id="KW-0809">Transit peptide</keyword>
<evidence type="ECO:0000250" key="1"/>
<evidence type="ECO:0000250" key="2">
    <source>
        <dbReference type="UniProtKB" id="P49419"/>
    </source>
</evidence>
<evidence type="ECO:0000255" key="3"/>
<evidence type="ECO:0000255" key="4">
    <source>
        <dbReference type="PROSITE-ProRule" id="PRU10007"/>
    </source>
</evidence>
<evidence type="ECO:0000269" key="5">
    <source>
    </source>
</evidence>
<evidence type="ECO:0000303" key="6">
    <source>
    </source>
</evidence>
<evidence type="ECO:0000305" key="7"/>
<evidence type="ECO:0000312" key="8">
    <source>
        <dbReference type="EMBL" id="BAB23726.1"/>
    </source>
</evidence>
<evidence type="ECO:0000312" key="9">
    <source>
        <dbReference type="MGI" id="MGI:108186"/>
    </source>
</evidence>
<evidence type="ECO:0007744" key="10">
    <source>
    </source>
</evidence>
<evidence type="ECO:0007744" key="11">
    <source>
    </source>
</evidence>
<organism evidence="8">
    <name type="scientific">Mus musculus</name>
    <name type="common">Mouse</name>
    <dbReference type="NCBI Taxonomy" id="10090"/>
    <lineage>
        <taxon>Eukaryota</taxon>
        <taxon>Metazoa</taxon>
        <taxon>Chordata</taxon>
        <taxon>Craniata</taxon>
        <taxon>Vertebrata</taxon>
        <taxon>Euteleostomi</taxon>
        <taxon>Mammalia</taxon>
        <taxon>Eutheria</taxon>
        <taxon>Euarchontoglires</taxon>
        <taxon>Glires</taxon>
        <taxon>Rodentia</taxon>
        <taxon>Myomorpha</taxon>
        <taxon>Muroidea</taxon>
        <taxon>Muridae</taxon>
        <taxon>Murinae</taxon>
        <taxon>Mus</taxon>
        <taxon>Mus</taxon>
    </lineage>
</organism>
<accession>Q9DBF1</accession>
<accession>Q3TFC7</accession>
<accession>Q3TVH7</accession>
<accession>Q3UKT6</accession>
<gene>
    <name evidence="9" type="primary">Aldh7a1</name>
    <name type="synonym">Ald7a1</name>
</gene>
<proteinExistence type="evidence at protein level"/>
<protein>
    <recommendedName>
        <fullName>Alpha-aminoadipic semialdehyde dehydrogenase</fullName>
        <shortName>Alpha-AASA dehydrogenase</shortName>
        <ecNumber evidence="2">1.2.1.31</ecNumber>
    </recommendedName>
    <alternativeName>
        <fullName>Aldehyde dehydrogenase family 7 member A1</fullName>
        <ecNumber evidence="2">1.2.1.3</ecNumber>
    </alternativeName>
    <alternativeName>
        <fullName>Antiquitin-1</fullName>
    </alternativeName>
    <alternativeName>
        <fullName>Betaine aldehyde dehydrogenase</fullName>
        <ecNumber evidence="2">1.2.1.8</ecNumber>
    </alternativeName>
    <alternativeName>
        <fullName>Delta1-piperideine-6-carboxylate dehydrogenase</fullName>
        <shortName>P6c dehydrogenase</shortName>
    </alternativeName>
</protein>
<feature type="transit peptide" description="Mitochondrion" evidence="3">
    <location>
        <begin position="1"/>
        <end position="26"/>
    </location>
</feature>
<feature type="chain" id="PRO_0000056491" description="Alpha-aminoadipic semialdehyde dehydrogenase">
    <location>
        <begin position="27"/>
        <end position="539"/>
    </location>
</feature>
<feature type="active site" description="Proton acceptor" evidence="4">
    <location>
        <position position="296"/>
    </location>
</feature>
<feature type="active site" description="Nucleophile" evidence="4">
    <location>
        <position position="330"/>
    </location>
</feature>
<feature type="binding site" evidence="2">
    <location>
        <begin position="192"/>
        <end position="194"/>
    </location>
    <ligand>
        <name>NAD(+)</name>
        <dbReference type="ChEBI" id="CHEBI:57540"/>
    </ligand>
</feature>
<feature type="binding site" evidence="2">
    <location>
        <position position="218"/>
    </location>
    <ligand>
        <name>NAD(+)</name>
        <dbReference type="ChEBI" id="CHEBI:57540"/>
    </ligand>
</feature>
<feature type="binding site" evidence="2">
    <location>
        <begin position="258"/>
        <end position="259"/>
    </location>
    <ligand>
        <name>NAD(+)</name>
        <dbReference type="ChEBI" id="CHEBI:57540"/>
    </ligand>
</feature>
<feature type="binding site" evidence="1">
    <location>
        <begin position="274"/>
        <end position="279"/>
    </location>
    <ligand>
        <name>NAD(+)</name>
        <dbReference type="ChEBI" id="CHEBI:57540"/>
    </ligand>
</feature>
<feature type="binding site" evidence="2">
    <location>
        <begin position="274"/>
        <end position="275"/>
    </location>
    <ligand>
        <name>NAD(+)</name>
        <dbReference type="ChEBI" id="CHEBI:57540"/>
    </ligand>
</feature>
<feature type="binding site" evidence="2">
    <location>
        <begin position="296"/>
        <end position="297"/>
    </location>
    <ligand>
        <name>NAD(+)</name>
        <dbReference type="ChEBI" id="CHEBI:57540"/>
    </ligand>
</feature>
<feature type="binding site" evidence="2">
    <location>
        <position position="331"/>
    </location>
    <ligand>
        <name>(S)-2-amino-6-oxohexanoate</name>
        <dbReference type="ChEBI" id="CHEBI:58321"/>
    </ligand>
</feature>
<feature type="binding site" evidence="2">
    <location>
        <position position="427"/>
    </location>
    <ligand>
        <name>NAD(+)</name>
        <dbReference type="ChEBI" id="CHEBI:57540"/>
    </ligand>
</feature>
<feature type="binding site" evidence="2">
    <location>
        <position position="489"/>
    </location>
    <ligand>
        <name>(S)-2-amino-6-oxohexanoate</name>
        <dbReference type="ChEBI" id="CHEBI:58321"/>
    </ligand>
</feature>
<feature type="binding site" evidence="2">
    <location>
        <position position="490"/>
    </location>
    <ligand>
        <name>(S)-2-amino-6-oxohexanoate</name>
        <dbReference type="ChEBI" id="CHEBI:58321"/>
    </ligand>
</feature>
<feature type="site" description="Transition state stabilizer" evidence="1">
    <location>
        <position position="195"/>
    </location>
</feature>
<feature type="modified residue" description="N6-acetyllysine; alternate" evidence="10">
    <location>
        <position position="86"/>
    </location>
</feature>
<feature type="modified residue" description="N6-succinyllysine; alternate" evidence="11">
    <location>
        <position position="86"/>
    </location>
</feature>
<feature type="modified residue" description="N6-acetyllysine; alternate" evidence="10">
    <location>
        <position position="94"/>
    </location>
</feature>
<feature type="modified residue" description="N6-succinyllysine; alternate" evidence="11">
    <location>
        <position position="94"/>
    </location>
</feature>
<feature type="modified residue" description="N6-acetyllysine; alternate" evidence="10">
    <location>
        <position position="97"/>
    </location>
</feature>
<feature type="modified residue" description="N6-succinyllysine; alternate" evidence="11">
    <location>
        <position position="97"/>
    </location>
</feature>
<feature type="modified residue" description="N6-acetyllysine" evidence="10">
    <location>
        <position position="462"/>
    </location>
</feature>
<feature type="modified residue" description="N6-acetyllysine" evidence="10">
    <location>
        <position position="500"/>
    </location>
</feature>
<feature type="modified residue" description="N6-succinyllysine" evidence="11">
    <location>
        <position position="537"/>
    </location>
</feature>
<feature type="splice variant" id="VSP_038989" description="In isoform 2." evidence="6">
    <location>
        <begin position="1"/>
        <end position="28"/>
    </location>
</feature>
<feature type="sequence conflict" description="In Ref. 1; BAE26715." evidence="7" ref="1">
    <original>I</original>
    <variation>M</variation>
    <location>
        <position position="164"/>
    </location>
</feature>
<feature type="sequence conflict" description="In Ref. 1; BAE35641." evidence="7" ref="1">
    <original>I</original>
    <variation>V</variation>
    <location>
        <position position="467"/>
    </location>
</feature>
<feature type="sequence conflict" description="In Ref. 1; BAE35641." evidence="7" ref="1">
    <original>E</original>
    <variation>G</variation>
    <location>
        <position position="491"/>
    </location>
</feature>